<evidence type="ECO:0000255" key="1"/>
<evidence type="ECO:0000305" key="2"/>
<proteinExistence type="inferred from homology"/>
<keyword id="KW-0472">Membrane</keyword>
<keyword id="KW-1185">Reference proteome</keyword>
<keyword id="KW-0812">Transmembrane</keyword>
<keyword id="KW-1133">Transmembrane helix</keyword>
<reference key="1">
    <citation type="journal article" date="2002" name="Nature">
        <title>The genome sequence of Schizosaccharomyces pombe.</title>
        <authorList>
            <person name="Wood V."/>
            <person name="Gwilliam R."/>
            <person name="Rajandream M.A."/>
            <person name="Lyne M.H."/>
            <person name="Lyne R."/>
            <person name="Stewart A."/>
            <person name="Sgouros J.G."/>
            <person name="Peat N."/>
            <person name="Hayles J."/>
            <person name="Baker S.G."/>
            <person name="Basham D."/>
            <person name="Bowman S."/>
            <person name="Brooks K."/>
            <person name="Brown D."/>
            <person name="Brown S."/>
            <person name="Chillingworth T."/>
            <person name="Churcher C.M."/>
            <person name="Collins M."/>
            <person name="Connor R."/>
            <person name="Cronin A."/>
            <person name="Davis P."/>
            <person name="Feltwell T."/>
            <person name="Fraser A."/>
            <person name="Gentles S."/>
            <person name="Goble A."/>
            <person name="Hamlin N."/>
            <person name="Harris D.E."/>
            <person name="Hidalgo J."/>
            <person name="Hodgson G."/>
            <person name="Holroyd S."/>
            <person name="Hornsby T."/>
            <person name="Howarth S."/>
            <person name="Huckle E.J."/>
            <person name="Hunt S."/>
            <person name="Jagels K."/>
            <person name="James K.D."/>
            <person name="Jones L."/>
            <person name="Jones M."/>
            <person name="Leather S."/>
            <person name="McDonald S."/>
            <person name="McLean J."/>
            <person name="Mooney P."/>
            <person name="Moule S."/>
            <person name="Mungall K.L."/>
            <person name="Murphy L.D."/>
            <person name="Niblett D."/>
            <person name="Odell C."/>
            <person name="Oliver K."/>
            <person name="O'Neil S."/>
            <person name="Pearson D."/>
            <person name="Quail M.A."/>
            <person name="Rabbinowitsch E."/>
            <person name="Rutherford K.M."/>
            <person name="Rutter S."/>
            <person name="Saunders D."/>
            <person name="Seeger K."/>
            <person name="Sharp S."/>
            <person name="Skelton J."/>
            <person name="Simmonds M.N."/>
            <person name="Squares R."/>
            <person name="Squares S."/>
            <person name="Stevens K."/>
            <person name="Taylor K."/>
            <person name="Taylor R.G."/>
            <person name="Tivey A."/>
            <person name="Walsh S.V."/>
            <person name="Warren T."/>
            <person name="Whitehead S."/>
            <person name="Woodward J.R."/>
            <person name="Volckaert G."/>
            <person name="Aert R."/>
            <person name="Robben J."/>
            <person name="Grymonprez B."/>
            <person name="Weltjens I."/>
            <person name="Vanstreels E."/>
            <person name="Rieger M."/>
            <person name="Schaefer M."/>
            <person name="Mueller-Auer S."/>
            <person name="Gabel C."/>
            <person name="Fuchs M."/>
            <person name="Duesterhoeft A."/>
            <person name="Fritzc C."/>
            <person name="Holzer E."/>
            <person name="Moestl D."/>
            <person name="Hilbert H."/>
            <person name="Borzym K."/>
            <person name="Langer I."/>
            <person name="Beck A."/>
            <person name="Lehrach H."/>
            <person name="Reinhardt R."/>
            <person name="Pohl T.M."/>
            <person name="Eger P."/>
            <person name="Zimmermann W."/>
            <person name="Wedler H."/>
            <person name="Wambutt R."/>
            <person name="Purnelle B."/>
            <person name="Goffeau A."/>
            <person name="Cadieu E."/>
            <person name="Dreano S."/>
            <person name="Gloux S."/>
            <person name="Lelaure V."/>
            <person name="Mottier S."/>
            <person name="Galibert F."/>
            <person name="Aves S.J."/>
            <person name="Xiang Z."/>
            <person name="Hunt C."/>
            <person name="Moore K."/>
            <person name="Hurst S.M."/>
            <person name="Lucas M."/>
            <person name="Rochet M."/>
            <person name="Gaillardin C."/>
            <person name="Tallada V.A."/>
            <person name="Garzon A."/>
            <person name="Thode G."/>
            <person name="Daga R.R."/>
            <person name="Cruzado L."/>
            <person name="Jimenez J."/>
            <person name="Sanchez M."/>
            <person name="del Rey F."/>
            <person name="Benito J."/>
            <person name="Dominguez A."/>
            <person name="Revuelta J.L."/>
            <person name="Moreno S."/>
            <person name="Armstrong J."/>
            <person name="Forsburg S.L."/>
            <person name="Cerutti L."/>
            <person name="Lowe T."/>
            <person name="McCombie W.R."/>
            <person name="Paulsen I."/>
            <person name="Potashkin J."/>
            <person name="Shpakovski G.V."/>
            <person name="Ussery D."/>
            <person name="Barrell B.G."/>
            <person name="Nurse P."/>
        </authorList>
    </citation>
    <scope>NUCLEOTIDE SEQUENCE [LARGE SCALE GENOMIC DNA]</scope>
    <source>
        <strain>972 / ATCC 24843</strain>
    </source>
</reference>
<comment type="subcellular location">
    <subcellularLocation>
        <location evidence="2">Membrane</location>
        <topology evidence="2">Multi-pass membrane protein</topology>
    </subcellularLocation>
</comment>
<comment type="similarity">
    <text evidence="2">Belongs to the ERGIC family.</text>
</comment>
<feature type="chain" id="PRO_0000116434" description="Uncharacterized protein C24B11.08c">
    <location>
        <begin position="1"/>
        <end position="390"/>
    </location>
</feature>
<feature type="transmembrane region" description="Helical" evidence="1">
    <location>
        <begin position="27"/>
        <end position="47"/>
    </location>
</feature>
<feature type="transmembrane region" description="Helical" evidence="1">
    <location>
        <begin position="356"/>
        <end position="376"/>
    </location>
</feature>
<accession>Q09895</accession>
<dbReference type="EMBL" id="CU329670">
    <property type="protein sequence ID" value="CAA91773.1"/>
    <property type="molecule type" value="Genomic_DNA"/>
</dbReference>
<dbReference type="PIR" id="T38335">
    <property type="entry name" value="S62553"/>
</dbReference>
<dbReference type="BioGRID" id="278038">
    <property type="interactions" value="14"/>
</dbReference>
<dbReference type="FunCoup" id="Q09895">
    <property type="interactions" value="412"/>
</dbReference>
<dbReference type="STRING" id="284812.Q09895"/>
<dbReference type="iPTMnet" id="Q09895"/>
<dbReference type="PaxDb" id="4896-SPAC24B11.08c.1"/>
<dbReference type="EnsemblFungi" id="SPAC24B11.08c.1">
    <property type="protein sequence ID" value="SPAC24B11.08c.1:pep"/>
    <property type="gene ID" value="SPAC24B11.08c"/>
</dbReference>
<dbReference type="KEGG" id="spo:2541538"/>
<dbReference type="PomBase" id="SPAC24B11.08c"/>
<dbReference type="VEuPathDB" id="FungiDB:SPAC24B11.08c"/>
<dbReference type="eggNOG" id="KOG2667">
    <property type="taxonomic scope" value="Eukaryota"/>
</dbReference>
<dbReference type="HOGENOM" id="CLU_034705_1_0_1"/>
<dbReference type="InParanoid" id="Q09895"/>
<dbReference type="OMA" id="QRHEGCR"/>
<dbReference type="PhylomeDB" id="Q09895"/>
<dbReference type="PRO" id="PR:Q09895"/>
<dbReference type="Proteomes" id="UP000002485">
    <property type="component" value="Chromosome I"/>
</dbReference>
<dbReference type="GO" id="GO:0030134">
    <property type="term" value="C:COPII-coated ER to Golgi transport vesicle"/>
    <property type="evidence" value="ECO:0000318"/>
    <property type="project" value="GO_Central"/>
</dbReference>
<dbReference type="GO" id="GO:0005783">
    <property type="term" value="C:endoplasmic reticulum"/>
    <property type="evidence" value="ECO:0007005"/>
    <property type="project" value="PomBase"/>
</dbReference>
<dbReference type="GO" id="GO:0005789">
    <property type="term" value="C:endoplasmic reticulum membrane"/>
    <property type="evidence" value="ECO:0000318"/>
    <property type="project" value="GO_Central"/>
</dbReference>
<dbReference type="GO" id="GO:0000139">
    <property type="term" value="C:Golgi membrane"/>
    <property type="evidence" value="ECO:0000318"/>
    <property type="project" value="GO_Central"/>
</dbReference>
<dbReference type="GO" id="GO:0006888">
    <property type="term" value="P:endoplasmic reticulum to Golgi vesicle-mediated transport"/>
    <property type="evidence" value="ECO:0000318"/>
    <property type="project" value="GO_Central"/>
</dbReference>
<dbReference type="GO" id="GO:0006886">
    <property type="term" value="P:intracellular protein transport"/>
    <property type="evidence" value="ECO:0000266"/>
    <property type="project" value="PomBase"/>
</dbReference>
<dbReference type="GO" id="GO:0006890">
    <property type="term" value="P:retrograde vesicle-mediated transport, Golgi to endoplasmic reticulum"/>
    <property type="evidence" value="ECO:0000318"/>
    <property type="project" value="GO_Central"/>
</dbReference>
<dbReference type="InterPro" id="IPR045888">
    <property type="entry name" value="Erv"/>
</dbReference>
<dbReference type="InterPro" id="IPR012936">
    <property type="entry name" value="Erv_C"/>
</dbReference>
<dbReference type="InterPro" id="IPR039542">
    <property type="entry name" value="Erv_N"/>
</dbReference>
<dbReference type="PANTHER" id="PTHR10984">
    <property type="entry name" value="ENDOPLASMIC RETICULUM-GOLGI INTERMEDIATE COMPARTMENT PROTEIN"/>
    <property type="match status" value="1"/>
</dbReference>
<dbReference type="PANTHER" id="PTHR10984:SF25">
    <property type="entry name" value="ENDOPLASMIC RETICULUM-GOLGI INTERMEDIATE COMPARTMENT PROTEIN 3"/>
    <property type="match status" value="1"/>
</dbReference>
<dbReference type="Pfam" id="PF07970">
    <property type="entry name" value="COPIIcoated_ERV"/>
    <property type="match status" value="1"/>
</dbReference>
<dbReference type="Pfam" id="PF13850">
    <property type="entry name" value="ERGIC_N"/>
    <property type="match status" value="1"/>
</dbReference>
<protein>
    <recommendedName>
        <fullName>Uncharacterized protein C24B11.08c</fullName>
    </recommendedName>
</protein>
<sequence>MQFRSPLRRFDAFQKTVEDARIKTASGGLITLVSGLIVIFIVLMEWINYRRVIAVHEIIVNPSHGDRMEINFNITFPRIPCQILTVDVLDVSGEFQRDIHHTVSKTRLSPSGEIISVDDLDIGNQQSISDDGAAECGDCYGAADFAPEDTPGCCNTCDAVRDAYGKAHWRIGDVDAFKQCKDENFKELYEAQKVEGCNLAGQLSVNRMAGNFHIAPGRSTQNGNQHVHDTRDYINELDLHDMSHSIHHLSFGPPLDASVHYSNPLDGTVKKVSTADYRYEYFIKCVSYQFMPLSKSTLPIDTNKYAVTQHERSIRGGREEKVPTHVNFHGGIPGVWFQFDISPMRVIERQVRGNTFGGFLSNVLALLGGCVTLASFVDRGYYEVQKLKKN</sequence>
<name>YAI8_SCHPO</name>
<organism>
    <name type="scientific">Schizosaccharomyces pombe (strain 972 / ATCC 24843)</name>
    <name type="common">Fission yeast</name>
    <dbReference type="NCBI Taxonomy" id="284812"/>
    <lineage>
        <taxon>Eukaryota</taxon>
        <taxon>Fungi</taxon>
        <taxon>Dikarya</taxon>
        <taxon>Ascomycota</taxon>
        <taxon>Taphrinomycotina</taxon>
        <taxon>Schizosaccharomycetes</taxon>
        <taxon>Schizosaccharomycetales</taxon>
        <taxon>Schizosaccharomycetaceae</taxon>
        <taxon>Schizosaccharomyces</taxon>
    </lineage>
</organism>
<gene>
    <name type="ORF">SPAC24B11.08c</name>
</gene>